<proteinExistence type="inferred from homology"/>
<gene>
    <name type="primary">irc3</name>
    <name type="ORF">SPBC11C11.11c</name>
    <name type="ORF">SPBC3B8.12</name>
</gene>
<organism>
    <name type="scientific">Schizosaccharomyces pombe (strain 972 / ATCC 24843)</name>
    <name type="common">Fission yeast</name>
    <dbReference type="NCBI Taxonomy" id="284812"/>
    <lineage>
        <taxon>Eukaryota</taxon>
        <taxon>Fungi</taxon>
        <taxon>Dikarya</taxon>
        <taxon>Ascomycota</taxon>
        <taxon>Taphrinomycotina</taxon>
        <taxon>Schizosaccharomycetes</taxon>
        <taxon>Schizosaccharomycetales</taxon>
        <taxon>Schizosaccharomycetaceae</taxon>
        <taxon>Schizosaccharomyces</taxon>
    </lineage>
</organism>
<keyword id="KW-0067">ATP-binding</keyword>
<keyword id="KW-0347">Helicase</keyword>
<keyword id="KW-0378">Hydrolase</keyword>
<keyword id="KW-0496">Mitochondrion</keyword>
<keyword id="KW-0547">Nucleotide-binding</keyword>
<keyword id="KW-1185">Reference proteome</keyword>
<protein>
    <recommendedName>
        <fullName>Putative mitochondrial ATP-dependent helicase irc3</fullName>
        <ecNumber>3.6.4.-</ecNumber>
    </recommendedName>
</protein>
<accession>Q1MTR1</accession>
<evidence type="ECO:0000250" key="1"/>
<evidence type="ECO:0000255" key="2">
    <source>
        <dbReference type="PROSITE-ProRule" id="PRU00541"/>
    </source>
</evidence>
<evidence type="ECO:0000255" key="3">
    <source>
        <dbReference type="PROSITE-ProRule" id="PRU00542"/>
    </source>
</evidence>
<evidence type="ECO:0000305" key="4"/>
<name>IRC3_SCHPO</name>
<reference key="1">
    <citation type="journal article" date="2002" name="Nature">
        <title>The genome sequence of Schizosaccharomyces pombe.</title>
        <authorList>
            <person name="Wood V."/>
            <person name="Gwilliam R."/>
            <person name="Rajandream M.A."/>
            <person name="Lyne M.H."/>
            <person name="Lyne R."/>
            <person name="Stewart A."/>
            <person name="Sgouros J.G."/>
            <person name="Peat N."/>
            <person name="Hayles J."/>
            <person name="Baker S.G."/>
            <person name="Basham D."/>
            <person name="Bowman S."/>
            <person name="Brooks K."/>
            <person name="Brown D."/>
            <person name="Brown S."/>
            <person name="Chillingworth T."/>
            <person name="Churcher C.M."/>
            <person name="Collins M."/>
            <person name="Connor R."/>
            <person name="Cronin A."/>
            <person name="Davis P."/>
            <person name="Feltwell T."/>
            <person name="Fraser A."/>
            <person name="Gentles S."/>
            <person name="Goble A."/>
            <person name="Hamlin N."/>
            <person name="Harris D.E."/>
            <person name="Hidalgo J."/>
            <person name="Hodgson G."/>
            <person name="Holroyd S."/>
            <person name="Hornsby T."/>
            <person name="Howarth S."/>
            <person name="Huckle E.J."/>
            <person name="Hunt S."/>
            <person name="Jagels K."/>
            <person name="James K.D."/>
            <person name="Jones L."/>
            <person name="Jones M."/>
            <person name="Leather S."/>
            <person name="McDonald S."/>
            <person name="McLean J."/>
            <person name="Mooney P."/>
            <person name="Moule S."/>
            <person name="Mungall K.L."/>
            <person name="Murphy L.D."/>
            <person name="Niblett D."/>
            <person name="Odell C."/>
            <person name="Oliver K."/>
            <person name="O'Neil S."/>
            <person name="Pearson D."/>
            <person name="Quail M.A."/>
            <person name="Rabbinowitsch E."/>
            <person name="Rutherford K.M."/>
            <person name="Rutter S."/>
            <person name="Saunders D."/>
            <person name="Seeger K."/>
            <person name="Sharp S."/>
            <person name="Skelton J."/>
            <person name="Simmonds M.N."/>
            <person name="Squares R."/>
            <person name="Squares S."/>
            <person name="Stevens K."/>
            <person name="Taylor K."/>
            <person name="Taylor R.G."/>
            <person name="Tivey A."/>
            <person name="Walsh S.V."/>
            <person name="Warren T."/>
            <person name="Whitehead S."/>
            <person name="Woodward J.R."/>
            <person name="Volckaert G."/>
            <person name="Aert R."/>
            <person name="Robben J."/>
            <person name="Grymonprez B."/>
            <person name="Weltjens I."/>
            <person name="Vanstreels E."/>
            <person name="Rieger M."/>
            <person name="Schaefer M."/>
            <person name="Mueller-Auer S."/>
            <person name="Gabel C."/>
            <person name="Fuchs M."/>
            <person name="Duesterhoeft A."/>
            <person name="Fritzc C."/>
            <person name="Holzer E."/>
            <person name="Moestl D."/>
            <person name="Hilbert H."/>
            <person name="Borzym K."/>
            <person name="Langer I."/>
            <person name="Beck A."/>
            <person name="Lehrach H."/>
            <person name="Reinhardt R."/>
            <person name="Pohl T.M."/>
            <person name="Eger P."/>
            <person name="Zimmermann W."/>
            <person name="Wedler H."/>
            <person name="Wambutt R."/>
            <person name="Purnelle B."/>
            <person name="Goffeau A."/>
            <person name="Cadieu E."/>
            <person name="Dreano S."/>
            <person name="Gloux S."/>
            <person name="Lelaure V."/>
            <person name="Mottier S."/>
            <person name="Galibert F."/>
            <person name="Aves S.J."/>
            <person name="Xiang Z."/>
            <person name="Hunt C."/>
            <person name="Moore K."/>
            <person name="Hurst S.M."/>
            <person name="Lucas M."/>
            <person name="Rochet M."/>
            <person name="Gaillardin C."/>
            <person name="Tallada V.A."/>
            <person name="Garzon A."/>
            <person name="Thode G."/>
            <person name="Daga R.R."/>
            <person name="Cruzado L."/>
            <person name="Jimenez J."/>
            <person name="Sanchez M."/>
            <person name="del Rey F."/>
            <person name="Benito J."/>
            <person name="Dominguez A."/>
            <person name="Revuelta J.L."/>
            <person name="Moreno S."/>
            <person name="Armstrong J."/>
            <person name="Forsburg S.L."/>
            <person name="Cerutti L."/>
            <person name="Lowe T."/>
            <person name="McCombie W.R."/>
            <person name="Paulsen I."/>
            <person name="Potashkin J."/>
            <person name="Shpakovski G.V."/>
            <person name="Ussery D."/>
            <person name="Barrell B.G."/>
            <person name="Nurse P."/>
        </authorList>
    </citation>
    <scope>NUCLEOTIDE SEQUENCE [LARGE SCALE GENOMIC DNA]</scope>
    <source>
        <strain>972 / ATCC 24843</strain>
    </source>
</reference>
<comment type="subcellular location">
    <subcellularLocation>
        <location evidence="1">Mitochondrion</location>
    </subcellularLocation>
</comment>
<comment type="similarity">
    <text evidence="4">Belongs to the helicase family. IRC3 subfamily.</text>
</comment>
<sequence length="606" mass="68943">MLLNACCKKNLWPRNGSTIFRRFALKLRPYQEECLSACLNAFDEGKRRIAVSLATGSGKTALFPHFIKYAPTLRPNSEQCLILVHRKELALQALKHCRESLPNKSIEIDMGNQCASGLADVTVASVFSLKNERLLKYNPLNFKLLIFDEVHHMASPSYLRILEHFGAESEKSKVNVIGLTATLFRADGKGLACGLDEIVYHRHFVDMIKDNWLVEPKVINIKWSTDLVLADSSSFLDQEKLKKEAQSEKAIFEIPRAWLEHASNRSSTLVFCINVEHSLKVCNAFRKLGIDARALFGETNDSERETLIQDFRKKKFPVLVNCMVLTEGTDIPNIDCLMIARPTSSPNLLTQMIGRGLRLHEGKRDCLILDFCDSLRRVSLHVDPTLAGLSPDEVENFYNKSKNSLANPDYDPKIYGLQSVLWYSKLRKLIEMMDNIKNKDRSIFNLSTNAWVAVGMGRYVLSFLQKVLIIDTNFEDGTHKISEYTKEKLGTRVYNRKRIVSDRIPSLKFAIRAAETYISNLKTPRSLISRKAVWRMRPASVRQINFLKKSNLKLDEKLLTAGVAADMITKVIYGGKGRQVRTDKLQSYLKHDANLKRITTLKELKG</sequence>
<dbReference type="EC" id="3.6.4.-"/>
<dbReference type="EMBL" id="CU329671">
    <property type="protein sequence ID" value="CAA20693.2"/>
    <property type="molecule type" value="Genomic_DNA"/>
</dbReference>
<dbReference type="RefSeq" id="XP_001713145.1">
    <property type="nucleotide sequence ID" value="XM_001713093.1"/>
</dbReference>
<dbReference type="SMR" id="Q1MTR1"/>
<dbReference type="BioGRID" id="276171">
    <property type="interactions" value="10"/>
</dbReference>
<dbReference type="FunCoup" id="Q1MTR1">
    <property type="interactions" value="14"/>
</dbReference>
<dbReference type="STRING" id="284812.Q1MTR1"/>
<dbReference type="REBASE" id="190417">
    <property type="entry name" value="Bce021ORF874P"/>
</dbReference>
<dbReference type="PaxDb" id="4896-SPBC11C11.11c.1"/>
<dbReference type="EnsemblFungi" id="SPBC11C11.11c.1">
    <property type="protein sequence ID" value="SPBC11C11.11c.1:pep"/>
    <property type="gene ID" value="SPBC11C11.11c"/>
</dbReference>
<dbReference type="PomBase" id="SPBC11C11.11c">
    <property type="gene designation" value="irc3"/>
</dbReference>
<dbReference type="VEuPathDB" id="FungiDB:SPBC11C11.11c"/>
<dbReference type="eggNOG" id="ENOG502QT4U">
    <property type="taxonomic scope" value="Eukaryota"/>
</dbReference>
<dbReference type="HOGENOM" id="CLU_014765_0_0_1"/>
<dbReference type="InParanoid" id="Q1MTR1"/>
<dbReference type="OMA" id="HVIDMVA"/>
<dbReference type="PhylomeDB" id="Q1MTR1"/>
<dbReference type="PRO" id="PR:Q1MTR1"/>
<dbReference type="Proteomes" id="UP000002485">
    <property type="component" value="Chromosome II"/>
</dbReference>
<dbReference type="GO" id="GO:0005737">
    <property type="term" value="C:cytoplasm"/>
    <property type="evidence" value="ECO:0007005"/>
    <property type="project" value="PomBase"/>
</dbReference>
<dbReference type="GO" id="GO:0005759">
    <property type="term" value="C:mitochondrial matrix"/>
    <property type="evidence" value="ECO:0000266"/>
    <property type="project" value="PomBase"/>
</dbReference>
<dbReference type="GO" id="GO:0005524">
    <property type="term" value="F:ATP binding"/>
    <property type="evidence" value="ECO:0007669"/>
    <property type="project" value="UniProtKB-KW"/>
</dbReference>
<dbReference type="GO" id="GO:0016887">
    <property type="term" value="F:ATP hydrolysis activity"/>
    <property type="evidence" value="ECO:0000318"/>
    <property type="project" value="GO_Central"/>
</dbReference>
<dbReference type="GO" id="GO:0003677">
    <property type="term" value="F:DNA binding"/>
    <property type="evidence" value="ECO:0000318"/>
    <property type="project" value="GO_Central"/>
</dbReference>
<dbReference type="GO" id="GO:0004386">
    <property type="term" value="F:helicase activity"/>
    <property type="evidence" value="ECO:0000250"/>
    <property type="project" value="PomBase"/>
</dbReference>
<dbReference type="GO" id="GO:0032042">
    <property type="term" value="P:mitochondrial DNA metabolic process"/>
    <property type="evidence" value="ECO:0000266"/>
    <property type="project" value="PomBase"/>
</dbReference>
<dbReference type="CDD" id="cd18799">
    <property type="entry name" value="SF2_C_EcoAI-like"/>
    <property type="match status" value="1"/>
</dbReference>
<dbReference type="Gene3D" id="3.40.50.300">
    <property type="entry name" value="P-loop containing nucleotide triphosphate hydrolases"/>
    <property type="match status" value="2"/>
</dbReference>
<dbReference type="InterPro" id="IPR006935">
    <property type="entry name" value="Helicase/UvrB_N"/>
</dbReference>
<dbReference type="InterPro" id="IPR014001">
    <property type="entry name" value="Helicase_ATP-bd"/>
</dbReference>
<dbReference type="InterPro" id="IPR001650">
    <property type="entry name" value="Helicase_C-like"/>
</dbReference>
<dbReference type="InterPro" id="IPR050742">
    <property type="entry name" value="Helicase_Restrict-Modif_Enz"/>
</dbReference>
<dbReference type="InterPro" id="IPR027417">
    <property type="entry name" value="P-loop_NTPase"/>
</dbReference>
<dbReference type="PANTHER" id="PTHR47396:SF1">
    <property type="entry name" value="ATP-DEPENDENT HELICASE IRC3-RELATED"/>
    <property type="match status" value="1"/>
</dbReference>
<dbReference type="PANTHER" id="PTHR47396">
    <property type="entry name" value="TYPE I RESTRICTION ENZYME ECOKI R PROTEIN"/>
    <property type="match status" value="1"/>
</dbReference>
<dbReference type="Pfam" id="PF00271">
    <property type="entry name" value="Helicase_C"/>
    <property type="match status" value="1"/>
</dbReference>
<dbReference type="Pfam" id="PF04851">
    <property type="entry name" value="ResIII"/>
    <property type="match status" value="1"/>
</dbReference>
<dbReference type="SMART" id="SM00487">
    <property type="entry name" value="DEXDc"/>
    <property type="match status" value="1"/>
</dbReference>
<dbReference type="SMART" id="SM00490">
    <property type="entry name" value="HELICc"/>
    <property type="match status" value="1"/>
</dbReference>
<dbReference type="SUPFAM" id="SSF52540">
    <property type="entry name" value="P-loop containing nucleoside triphosphate hydrolases"/>
    <property type="match status" value="1"/>
</dbReference>
<dbReference type="PROSITE" id="PS51192">
    <property type="entry name" value="HELICASE_ATP_BIND_1"/>
    <property type="match status" value="1"/>
</dbReference>
<dbReference type="PROSITE" id="PS51194">
    <property type="entry name" value="HELICASE_CTER"/>
    <property type="match status" value="1"/>
</dbReference>
<feature type="chain" id="PRO_0000353817" description="Putative mitochondrial ATP-dependent helicase irc3">
    <location>
        <begin position="1"/>
        <end position="606"/>
    </location>
</feature>
<feature type="domain" description="Helicase ATP-binding" evidence="2">
    <location>
        <begin position="40"/>
        <end position="201"/>
    </location>
</feature>
<feature type="domain" description="Helicase C-terminal" evidence="3">
    <location>
        <begin position="246"/>
        <end position="398"/>
    </location>
</feature>
<feature type="short sequence motif" description="DEAH box">
    <location>
        <begin position="148"/>
        <end position="151"/>
    </location>
</feature>
<feature type="binding site" evidence="2">
    <location>
        <begin position="53"/>
        <end position="60"/>
    </location>
    <ligand>
        <name>ATP</name>
        <dbReference type="ChEBI" id="CHEBI:30616"/>
    </ligand>
</feature>